<feature type="chain" id="PRO_0000404568" description="E3 ubiquitin-protein ligase listerin">
    <location>
        <begin position="1"/>
        <end position="1766"/>
    </location>
</feature>
<feature type="repeat" description="HEAT 1" evidence="3">
    <location>
        <begin position="100"/>
        <end position="138"/>
    </location>
</feature>
<feature type="repeat" description="HEAT 2" evidence="3">
    <location>
        <begin position="193"/>
        <end position="231"/>
    </location>
</feature>
<feature type="repeat" description="HEAT 3" evidence="3">
    <location>
        <begin position="292"/>
        <end position="329"/>
    </location>
</feature>
<feature type="repeat" description="HEAT 4" evidence="3">
    <location>
        <begin position="335"/>
        <end position="372"/>
    </location>
</feature>
<feature type="repeat" description="HEAT 5" evidence="3">
    <location>
        <begin position="512"/>
        <end position="549"/>
    </location>
</feature>
<feature type="repeat" description="HEAT 6" evidence="3">
    <location>
        <begin position="606"/>
        <end position="644"/>
    </location>
</feature>
<feature type="repeat" description="HEAT 7" evidence="3">
    <location>
        <begin position="672"/>
        <end position="710"/>
    </location>
</feature>
<feature type="repeat" description="HEAT 8" evidence="3">
    <location>
        <begin position="916"/>
        <end position="953"/>
    </location>
</feature>
<feature type="repeat" description="HEAT 9" evidence="3">
    <location>
        <begin position="1184"/>
        <end position="1227"/>
    </location>
</feature>
<feature type="repeat" description="HEAT 10" evidence="3">
    <location>
        <begin position="1314"/>
        <end position="1355"/>
    </location>
</feature>
<feature type="repeat" description="HEAT 11" evidence="3">
    <location>
        <begin position="1406"/>
        <end position="1447"/>
    </location>
</feature>
<feature type="zinc finger region" description="RING-type" evidence="4">
    <location>
        <begin position="1715"/>
        <end position="1762"/>
    </location>
</feature>
<feature type="region of interest" description="Disordered" evidence="5">
    <location>
        <begin position="1"/>
        <end position="20"/>
    </location>
</feature>
<feature type="region of interest" description="Disordered" evidence="5">
    <location>
        <begin position="529"/>
        <end position="567"/>
    </location>
</feature>
<feature type="compositionally biased region" description="Basic residues" evidence="5">
    <location>
        <begin position="1"/>
        <end position="11"/>
    </location>
</feature>
<feature type="compositionally biased region" description="Basic and acidic residues" evidence="5">
    <location>
        <begin position="551"/>
        <end position="566"/>
    </location>
</feature>
<organism>
    <name type="scientific">Gallus gallus</name>
    <name type="common">Chicken</name>
    <dbReference type="NCBI Taxonomy" id="9031"/>
    <lineage>
        <taxon>Eukaryota</taxon>
        <taxon>Metazoa</taxon>
        <taxon>Chordata</taxon>
        <taxon>Craniata</taxon>
        <taxon>Vertebrata</taxon>
        <taxon>Euteleostomi</taxon>
        <taxon>Archelosauria</taxon>
        <taxon>Archosauria</taxon>
        <taxon>Dinosauria</taxon>
        <taxon>Saurischia</taxon>
        <taxon>Theropoda</taxon>
        <taxon>Coelurosauria</taxon>
        <taxon>Aves</taxon>
        <taxon>Neognathae</taxon>
        <taxon>Galloanserae</taxon>
        <taxon>Galliformes</taxon>
        <taxon>Phasianidae</taxon>
        <taxon>Phasianinae</taxon>
        <taxon>Gallus</taxon>
    </lineage>
</organism>
<gene>
    <name type="primary">LTN1</name>
    <name type="synonym">RNF160</name>
</gene>
<accession>E1C231</accession>
<comment type="function">
    <text evidence="1 2">E3 ubiquitin-protein ligase component of the ribosome quality control complex (RQC), a ribosome-associated complex that mediates ubiquitination and extraction of incompletely synthesized nascent chains for proteasomal degradation. Within the RQC complex, LTN1 is recruited to stalled 60S ribosomal subunits by NEMF and mediates ubiquitination of stalled nascent chains (By similarity). Ubiquitination leads to VCP/p97 recruitment for extraction and degradation of the incomplete translation product (By similarity).</text>
</comment>
<comment type="catalytic activity">
    <reaction evidence="1">
        <text>S-ubiquitinyl-[E2 ubiquitin-conjugating enzyme]-L-cysteine + [acceptor protein]-L-lysine = [E2 ubiquitin-conjugating enzyme]-L-cysteine + N(6)-ubiquitinyl-[acceptor protein]-L-lysine.</text>
        <dbReference type="EC" id="2.3.2.27"/>
    </reaction>
</comment>
<comment type="pathway">
    <text evidence="1">Protein modification; protein ubiquitination.</text>
</comment>
<comment type="subunit">
    <text evidence="1 2">Component of the ribosome quality control complex (RQC), composed of at least the E3 ubiquitin ligase LTN1 and NEMF associated with the 60S ribosomal subunit. The complex probably also contains TCF25 as well as VCP/p97 and its ubiquitin-binding cofactors.</text>
</comment>
<comment type="subcellular location">
    <subcellularLocation>
        <location evidence="1">Cytoplasm</location>
        <location evidence="1">Cytosol</location>
    </subcellularLocation>
</comment>
<comment type="similarity">
    <text evidence="6">Belongs to the LTN1 family.</text>
</comment>
<keyword id="KW-0963">Cytoplasm</keyword>
<keyword id="KW-0479">Metal-binding</keyword>
<keyword id="KW-1185">Reference proteome</keyword>
<keyword id="KW-0677">Repeat</keyword>
<keyword id="KW-0808">Transferase</keyword>
<keyword id="KW-0833">Ubl conjugation pathway</keyword>
<keyword id="KW-0862">Zinc</keyword>
<keyword id="KW-0863">Zinc-finger</keyword>
<proteinExistence type="inferred from homology"/>
<reference key="1">
    <citation type="journal article" date="2004" name="Nature">
        <title>Sequence and comparative analysis of the chicken genome provide unique perspectives on vertebrate evolution.</title>
        <authorList>
            <person name="Hillier L.W."/>
            <person name="Miller W."/>
            <person name="Birney E."/>
            <person name="Warren W."/>
            <person name="Hardison R.C."/>
            <person name="Ponting C.P."/>
            <person name="Bork P."/>
            <person name="Burt D.W."/>
            <person name="Groenen M.A.M."/>
            <person name="Delany M.E."/>
            <person name="Dodgson J.B."/>
            <person name="Chinwalla A.T."/>
            <person name="Cliften P.F."/>
            <person name="Clifton S.W."/>
            <person name="Delehaunty K.D."/>
            <person name="Fronick C."/>
            <person name="Fulton R.S."/>
            <person name="Graves T.A."/>
            <person name="Kremitzki C."/>
            <person name="Layman D."/>
            <person name="Magrini V."/>
            <person name="McPherson J.D."/>
            <person name="Miner T.L."/>
            <person name="Minx P."/>
            <person name="Nash W.E."/>
            <person name="Nhan M.N."/>
            <person name="Nelson J.O."/>
            <person name="Oddy L.G."/>
            <person name="Pohl C.S."/>
            <person name="Randall-Maher J."/>
            <person name="Smith S.M."/>
            <person name="Wallis J.W."/>
            <person name="Yang S.-P."/>
            <person name="Romanov M.N."/>
            <person name="Rondelli C.M."/>
            <person name="Paton B."/>
            <person name="Smith J."/>
            <person name="Morrice D."/>
            <person name="Daniels L."/>
            <person name="Tempest H.G."/>
            <person name="Robertson L."/>
            <person name="Masabanda J.S."/>
            <person name="Griffin D.K."/>
            <person name="Vignal A."/>
            <person name="Fillon V."/>
            <person name="Jacobbson L."/>
            <person name="Kerje S."/>
            <person name="Andersson L."/>
            <person name="Crooijmans R.P."/>
            <person name="Aerts J."/>
            <person name="van der Poel J.J."/>
            <person name="Ellegren H."/>
            <person name="Caldwell R.B."/>
            <person name="Hubbard S.J."/>
            <person name="Grafham D.V."/>
            <person name="Kierzek A.M."/>
            <person name="McLaren S.R."/>
            <person name="Overton I.M."/>
            <person name="Arakawa H."/>
            <person name="Beattie K.J."/>
            <person name="Bezzubov Y."/>
            <person name="Boardman P.E."/>
            <person name="Bonfield J.K."/>
            <person name="Croning M.D.R."/>
            <person name="Davies R.M."/>
            <person name="Francis M.D."/>
            <person name="Humphray S.J."/>
            <person name="Scott C.E."/>
            <person name="Taylor R.G."/>
            <person name="Tickle C."/>
            <person name="Brown W.R.A."/>
            <person name="Rogers J."/>
            <person name="Buerstedde J.-M."/>
            <person name="Wilson S.A."/>
            <person name="Stubbs L."/>
            <person name="Ovcharenko I."/>
            <person name="Gordon L."/>
            <person name="Lucas S."/>
            <person name="Miller M.M."/>
            <person name="Inoko H."/>
            <person name="Shiina T."/>
            <person name="Kaufman J."/>
            <person name="Salomonsen J."/>
            <person name="Skjoedt K."/>
            <person name="Wong G.K.-S."/>
            <person name="Wang J."/>
            <person name="Liu B."/>
            <person name="Wang J."/>
            <person name="Yu J."/>
            <person name="Yang H."/>
            <person name="Nefedov M."/>
            <person name="Koriabine M."/>
            <person name="Dejong P.J."/>
            <person name="Goodstadt L."/>
            <person name="Webber C."/>
            <person name="Dickens N.J."/>
            <person name="Letunic I."/>
            <person name="Suyama M."/>
            <person name="Torrents D."/>
            <person name="von Mering C."/>
            <person name="Zdobnov E.M."/>
            <person name="Makova K."/>
            <person name="Nekrutenko A."/>
            <person name="Elnitski L."/>
            <person name="Eswara P."/>
            <person name="King D.C."/>
            <person name="Yang S.-P."/>
            <person name="Tyekucheva S."/>
            <person name="Radakrishnan A."/>
            <person name="Harris R.S."/>
            <person name="Chiaromonte F."/>
            <person name="Taylor J."/>
            <person name="He J."/>
            <person name="Rijnkels M."/>
            <person name="Griffiths-Jones S."/>
            <person name="Ureta-Vidal A."/>
            <person name="Hoffman M.M."/>
            <person name="Severin J."/>
            <person name="Searle S.M.J."/>
            <person name="Law A.S."/>
            <person name="Speed D."/>
            <person name="Waddington D."/>
            <person name="Cheng Z."/>
            <person name="Tuzun E."/>
            <person name="Eichler E."/>
            <person name="Bao Z."/>
            <person name="Flicek P."/>
            <person name="Shteynberg D.D."/>
            <person name="Brent M.R."/>
            <person name="Bye J.M."/>
            <person name="Huckle E.J."/>
            <person name="Chatterji S."/>
            <person name="Dewey C."/>
            <person name="Pachter L."/>
            <person name="Kouranov A."/>
            <person name="Mourelatos Z."/>
            <person name="Hatzigeorgiou A.G."/>
            <person name="Paterson A.H."/>
            <person name="Ivarie R."/>
            <person name="Brandstrom M."/>
            <person name="Axelsson E."/>
            <person name="Backstrom N."/>
            <person name="Berlin S."/>
            <person name="Webster M.T."/>
            <person name="Pourquie O."/>
            <person name="Reymond A."/>
            <person name="Ucla C."/>
            <person name="Antonarakis S.E."/>
            <person name="Long M."/>
            <person name="Emerson J.J."/>
            <person name="Betran E."/>
            <person name="Dupanloup I."/>
            <person name="Kaessmann H."/>
            <person name="Hinrichs A.S."/>
            <person name="Bejerano G."/>
            <person name="Furey T.S."/>
            <person name="Harte R.A."/>
            <person name="Raney B."/>
            <person name="Siepel A."/>
            <person name="Kent W.J."/>
            <person name="Haussler D."/>
            <person name="Eyras E."/>
            <person name="Castelo R."/>
            <person name="Abril J.F."/>
            <person name="Castellano S."/>
            <person name="Camara F."/>
            <person name="Parra G."/>
            <person name="Guigo R."/>
            <person name="Bourque G."/>
            <person name="Tesler G."/>
            <person name="Pevzner P.A."/>
            <person name="Smit A."/>
            <person name="Fulton L.A."/>
            <person name="Mardis E.R."/>
            <person name="Wilson R.K."/>
        </authorList>
    </citation>
    <scope>NUCLEOTIDE SEQUENCE [LARGE SCALE GENOMIC DNA]</scope>
    <source>
        <strain>Red jungle fowl</strain>
    </source>
</reference>
<sequence length="1766" mass="199446">MGGKNKQRTKGNVRPSSSGRAAELLAKERGTVPGFIGFGTSQSDLGYVPAVQGAEEIDSLVDADFRMVLRKLSKRDIITKLKAMQEFGTMCKEREAEVVKGVLPYWPRIYCKISLDHDRRVREATQQSFEQLILKVKKHLAPYLKSIMGYWLIAQCDTYSPAASAAKEAFEKAFPSSKQPEALAFCKDEILNVLQDHLLKETPDTLSDPQTVPEEEREAKFFRILTCSLLALKKLLSMLPKKEMHSLEEKLMSLLSQNKFWKYGKHSTPQVRSAFFELASAFCQFLPELVKAEAPRVCPAVLLSIDDSDAVVCPALWEAVLHAIATIEDCWSHVNARKGVLPKLWTVLREGGRGLATVIYPNILPFISKVPPGITEPKLEYFRTFFSSIIQGLSNERALASPSESSAIITTFMECLRFAILQKIDEDEQRQIHQMLIYDQLIPLTDAVLQEPRLQNGPLFYQIAETLSSWEAKAEVSSDDNTNEVFQKLLSNFWDRLLKMCILHVDKLEADEKTLFAISDMLEVLQNPKTATKPNNRKSLKVKFSDEDESERNTENGKITEVRSNSDSEIQADLQHSSILRKEPLENLVCNLAELSIVYVNEQKSEQHLKFLSALLNFFSSNRVFQVLLEQGSNAGCPPAESQEDMKVHNENPSVQFLYMNLITWLKEDWRKDMHFLVDILYSVLNCCNSDDERKVILDDLTKMDLKWIVFLQIIQKACSSTTKLSLISEWLKGDMLGERLVMLADDLCHLGLKPIATSPESSSSEKWTVLSLVLSQHIKNESLIGETYVERIIDKLQAALSKAKDLSEAGNTEPSVSFICDVASSFFSSVKGCLLMPSSEDLLLTIFQLCAQRQDATHLTVDLLVCKLKHTWISGVNSLVRHLRSMQNQSTFLHKSALWIKNQIQSSSLDVKSLQVLISAVSDLLSTLLEADRQSGCLVGAYVEHVMPNRTEWETLRESLSAEWMHKPLLEGRLSMNCEHLGSCVKLCGTTKLPGHLCTSALLSKMVLLVLENDMVKGNEDAEILVAELLYSLQWIEELENPPYLLLEYLHMLEEMHITYEKFSALSNTTNLQQTIFDRSEEHGRLWSLTMAKVIRGENAVSREMTKLFKTSEGFLPLTEGRLHTLQCLSPFLIEEEKRELVFHCVAKLMTCTQTELSSTDGAFGCLAILNSSLNDKSFGCDHLLPGVLKIIISWKNDNEDSFLFSCNLKETSAQLLGFNIEMIRYLPLLLKYSTAPLADNEWDFIMCSMLAWLETTSENYSLYHVPLVQIFACVSCDLASALSAYFEPAAPKTTENLPVNLVSEWKEFFSEGIHNLLLPLFVKVTGETKTAAEGSFQNSVLTSLGEALTYISKDQLLNHKLPAKFVAGQKTNLPDNLQTLLNTLSPLLLFWARSVQVSVYHMLSKLMPELPKFDDEDLKSYGDEEEELALSPPAALMSVLATQELLLENILECIPVGEFAVIQPLSDEFCLVLGYLLTWKLTLTFFKAASSQLRVLYSQYLRRTKSLNKLLYHLFRLMPENPVFSGLTSEVPNKDTKTFFTEELHLDVKGTGALSSQIPHLACSVYHITLKDLPAMVRLWWNSCEKRVFNVVDKFTSKYVSSVLSSQEISSVQTSTQLFNGMTVKARSAAREVIATYSVDDIFIELIIQLPSNYPLGSITVESGKRVGVAVQQWRNWMLQLSTYLTHQNGSIMEGLSLWKNNVDKRFEGIEDCMICFSVIHGSNYSLPKKACRTCKKKFHSACLYKWFTSSNKSTCPLCRETFF</sequence>
<protein>
    <recommendedName>
        <fullName>E3 ubiquitin-protein ligase listerin</fullName>
        <ecNumber evidence="1">2.3.2.27</ecNumber>
    </recommendedName>
    <alternativeName>
        <fullName>RING finger protein 160</fullName>
        <shortName>Zfp-294</shortName>
    </alternativeName>
    <alternativeName>
        <fullName evidence="6">RING-type E3 ubiquitin transferase listerin</fullName>
    </alternativeName>
</protein>
<dbReference type="EC" id="2.3.2.27" evidence="1"/>
<dbReference type="EMBL" id="AC147443">
    <property type="status" value="NOT_ANNOTATED_CDS"/>
    <property type="molecule type" value="Genomic_DNA"/>
</dbReference>
<dbReference type="SMR" id="E1C231"/>
<dbReference type="FunCoup" id="E1C231">
    <property type="interactions" value="2666"/>
</dbReference>
<dbReference type="STRING" id="9031.ENSGALP00000025437"/>
<dbReference type="PaxDb" id="9031-ENSGALP00000025437"/>
<dbReference type="VEuPathDB" id="HostDB:geneid_418482"/>
<dbReference type="eggNOG" id="KOG0803">
    <property type="taxonomic scope" value="Eukaryota"/>
</dbReference>
<dbReference type="HOGENOM" id="CLU_002412_0_0_1"/>
<dbReference type="InParanoid" id="E1C231"/>
<dbReference type="OrthoDB" id="6108at2759"/>
<dbReference type="PhylomeDB" id="E1C231"/>
<dbReference type="TreeFam" id="TF314286"/>
<dbReference type="UniPathway" id="UPA00143"/>
<dbReference type="Proteomes" id="UP000000539">
    <property type="component" value="Unassembled WGS sequence"/>
</dbReference>
<dbReference type="GO" id="GO:0005829">
    <property type="term" value="C:cytosol"/>
    <property type="evidence" value="ECO:0000250"/>
    <property type="project" value="UniProtKB"/>
</dbReference>
<dbReference type="GO" id="GO:1990112">
    <property type="term" value="C:RQC complex"/>
    <property type="evidence" value="ECO:0000250"/>
    <property type="project" value="UniProtKB"/>
</dbReference>
<dbReference type="GO" id="GO:0043023">
    <property type="term" value="F:ribosomal large subunit binding"/>
    <property type="evidence" value="ECO:0000318"/>
    <property type="project" value="GO_Central"/>
</dbReference>
<dbReference type="GO" id="GO:0061630">
    <property type="term" value="F:ubiquitin protein ligase activity"/>
    <property type="evidence" value="ECO:0000250"/>
    <property type="project" value="UniProtKB"/>
</dbReference>
<dbReference type="GO" id="GO:0008270">
    <property type="term" value="F:zinc ion binding"/>
    <property type="evidence" value="ECO:0007669"/>
    <property type="project" value="UniProtKB-KW"/>
</dbReference>
<dbReference type="GO" id="GO:0016567">
    <property type="term" value="P:protein ubiquitination"/>
    <property type="evidence" value="ECO:0007669"/>
    <property type="project" value="UniProtKB-UniPathway"/>
</dbReference>
<dbReference type="GO" id="GO:0072344">
    <property type="term" value="P:rescue of stalled ribosome"/>
    <property type="evidence" value="ECO:0000318"/>
    <property type="project" value="GO_Central"/>
</dbReference>
<dbReference type="GO" id="GO:1990116">
    <property type="term" value="P:ribosome-associated ubiquitin-dependent protein catabolic process"/>
    <property type="evidence" value="ECO:0000250"/>
    <property type="project" value="UniProtKB"/>
</dbReference>
<dbReference type="CDD" id="cd16491">
    <property type="entry name" value="RING-CH-C4HC3_LTN1"/>
    <property type="match status" value="1"/>
</dbReference>
<dbReference type="FunFam" id="3.30.40.10:FF:000038">
    <property type="entry name" value="E3 ubiquitin-protein ligase listerin"/>
    <property type="match status" value="1"/>
</dbReference>
<dbReference type="FunFam" id="1.25.10.10:FF:001251">
    <property type="entry name" value="Predicted protein"/>
    <property type="match status" value="1"/>
</dbReference>
<dbReference type="Gene3D" id="1.25.10.10">
    <property type="entry name" value="Leucine-rich Repeat Variant"/>
    <property type="match status" value="1"/>
</dbReference>
<dbReference type="Gene3D" id="3.30.40.10">
    <property type="entry name" value="Zinc/RING finger domain, C3HC4 (zinc finger)"/>
    <property type="match status" value="1"/>
</dbReference>
<dbReference type="InterPro" id="IPR011989">
    <property type="entry name" value="ARM-like"/>
</dbReference>
<dbReference type="InterPro" id="IPR016024">
    <property type="entry name" value="ARM-type_fold"/>
</dbReference>
<dbReference type="InterPro" id="IPR039795">
    <property type="entry name" value="LTN1/Rkr1"/>
</dbReference>
<dbReference type="InterPro" id="IPR054477">
    <property type="entry name" value="LTN1_E3_ligase_6th"/>
</dbReference>
<dbReference type="InterPro" id="IPR056241">
    <property type="entry name" value="LTN1_HEAT_5th"/>
</dbReference>
<dbReference type="InterPro" id="IPR054476">
    <property type="entry name" value="Ltn1_N"/>
</dbReference>
<dbReference type="InterPro" id="IPR054478">
    <property type="entry name" value="LTN1_UBC"/>
</dbReference>
<dbReference type="InterPro" id="IPR039804">
    <property type="entry name" value="RING-CH-C4HC3_LTN1"/>
</dbReference>
<dbReference type="InterPro" id="IPR001841">
    <property type="entry name" value="Znf_RING"/>
</dbReference>
<dbReference type="InterPro" id="IPR011016">
    <property type="entry name" value="Znf_RING-CH"/>
</dbReference>
<dbReference type="InterPro" id="IPR013083">
    <property type="entry name" value="Znf_RING/FYVE/PHD"/>
</dbReference>
<dbReference type="PANTHER" id="PTHR12389:SF0">
    <property type="entry name" value="E3 UBIQUITIN-PROTEIN LIGASE LISTERIN"/>
    <property type="match status" value="1"/>
</dbReference>
<dbReference type="PANTHER" id="PTHR12389">
    <property type="entry name" value="ZINC FINGER PROTEIN 294"/>
    <property type="match status" value="1"/>
</dbReference>
<dbReference type="Pfam" id="PF22958">
    <property type="entry name" value="Ltn1_1st"/>
    <property type="match status" value="1"/>
</dbReference>
<dbReference type="Pfam" id="PF24618">
    <property type="entry name" value="LTN1_E3_ligase_5th"/>
    <property type="match status" value="1"/>
</dbReference>
<dbReference type="Pfam" id="PF22999">
    <property type="entry name" value="LTN1_E3_ligase_6th"/>
    <property type="match status" value="1"/>
</dbReference>
<dbReference type="Pfam" id="PF23009">
    <property type="entry name" value="UBC_like"/>
    <property type="match status" value="1"/>
</dbReference>
<dbReference type="Pfam" id="PF13639">
    <property type="entry name" value="zf-RING_2"/>
    <property type="match status" value="1"/>
</dbReference>
<dbReference type="SMART" id="SM00744">
    <property type="entry name" value="RINGv"/>
    <property type="match status" value="1"/>
</dbReference>
<dbReference type="SUPFAM" id="SSF48371">
    <property type="entry name" value="ARM repeat"/>
    <property type="match status" value="1"/>
</dbReference>
<dbReference type="SUPFAM" id="SSF57850">
    <property type="entry name" value="RING/U-box"/>
    <property type="match status" value="1"/>
</dbReference>
<dbReference type="PROSITE" id="PS50089">
    <property type="entry name" value="ZF_RING_2"/>
    <property type="match status" value="1"/>
</dbReference>
<name>LTN1_CHICK</name>
<evidence type="ECO:0000250" key="1">
    <source>
        <dbReference type="UniProtKB" id="O94822"/>
    </source>
</evidence>
<evidence type="ECO:0000250" key="2">
    <source>
        <dbReference type="UniProtKB" id="Q04781"/>
    </source>
</evidence>
<evidence type="ECO:0000255" key="3"/>
<evidence type="ECO:0000255" key="4">
    <source>
        <dbReference type="PROSITE-ProRule" id="PRU00175"/>
    </source>
</evidence>
<evidence type="ECO:0000256" key="5">
    <source>
        <dbReference type="SAM" id="MobiDB-lite"/>
    </source>
</evidence>
<evidence type="ECO:0000305" key="6"/>